<dbReference type="EC" id="3.4.24.-"/>
<dbReference type="EMBL" id="AP003328">
    <property type="protein sequence ID" value="BAD61518.1"/>
    <property type="status" value="ALT_SEQ"/>
    <property type="molecule type" value="Genomic_DNA"/>
</dbReference>
<dbReference type="EMBL" id="AP003328">
    <property type="protein sequence ID" value="BAD61519.1"/>
    <property type="status" value="ALT_SEQ"/>
    <property type="molecule type" value="Genomic_DNA"/>
</dbReference>
<dbReference type="EMBL" id="AP008207">
    <property type="protein sequence ID" value="BAF05507.2"/>
    <property type="status" value="ALT_SEQ"/>
    <property type="molecule type" value="Genomic_DNA"/>
</dbReference>
<dbReference type="EMBL" id="AP014957">
    <property type="status" value="NOT_ANNOTATED_CDS"/>
    <property type="molecule type" value="Genomic_DNA"/>
</dbReference>
<dbReference type="EMBL" id="CM000138">
    <property type="status" value="NOT_ANNOTATED_CDS"/>
    <property type="molecule type" value="Genomic_DNA"/>
</dbReference>
<dbReference type="SMR" id="A2ZVG7"/>
<dbReference type="FunCoup" id="A2ZVG7">
    <property type="interactions" value="745"/>
</dbReference>
<dbReference type="STRING" id="39947.A2ZVG7"/>
<dbReference type="MEROPS" id="M41.018"/>
<dbReference type="PaxDb" id="39947-A2ZVG7"/>
<dbReference type="KEGG" id="dosa:Os01g0618800"/>
<dbReference type="eggNOG" id="KOG0734">
    <property type="taxonomic scope" value="Eukaryota"/>
</dbReference>
<dbReference type="HOGENOM" id="CLU_000688_9_4_1"/>
<dbReference type="InParanoid" id="A2ZVG7"/>
<dbReference type="Proteomes" id="UP000000763">
    <property type="component" value="Chromosome 1"/>
</dbReference>
<dbReference type="Proteomes" id="UP000007752">
    <property type="component" value="Chromosome 1"/>
</dbReference>
<dbReference type="Proteomes" id="UP000059680">
    <property type="component" value="Chromosome 1"/>
</dbReference>
<dbReference type="GO" id="GO:0009507">
    <property type="term" value="C:chloroplast"/>
    <property type="evidence" value="ECO:0000318"/>
    <property type="project" value="GO_Central"/>
</dbReference>
<dbReference type="GO" id="GO:0009535">
    <property type="term" value="C:chloroplast thylakoid membrane"/>
    <property type="evidence" value="ECO:0007669"/>
    <property type="project" value="UniProtKB-SubCell"/>
</dbReference>
<dbReference type="GO" id="GO:0031966">
    <property type="term" value="C:mitochondrial membrane"/>
    <property type="evidence" value="ECO:0007669"/>
    <property type="project" value="UniProtKB-SubCell"/>
</dbReference>
<dbReference type="GO" id="GO:0005524">
    <property type="term" value="F:ATP binding"/>
    <property type="evidence" value="ECO:0007669"/>
    <property type="project" value="UniProtKB-KW"/>
</dbReference>
<dbReference type="GO" id="GO:0016887">
    <property type="term" value="F:ATP hydrolysis activity"/>
    <property type="evidence" value="ECO:0007669"/>
    <property type="project" value="InterPro"/>
</dbReference>
<dbReference type="GO" id="GO:0004176">
    <property type="term" value="F:ATP-dependent peptidase activity"/>
    <property type="evidence" value="ECO:0000318"/>
    <property type="project" value="GO_Central"/>
</dbReference>
<dbReference type="GO" id="GO:0046872">
    <property type="term" value="F:metal ion binding"/>
    <property type="evidence" value="ECO:0007669"/>
    <property type="project" value="UniProtKB-KW"/>
</dbReference>
<dbReference type="GO" id="GO:0004222">
    <property type="term" value="F:metalloendopeptidase activity"/>
    <property type="evidence" value="ECO:0007669"/>
    <property type="project" value="InterPro"/>
</dbReference>
<dbReference type="GO" id="GO:0045037">
    <property type="term" value="P:protein import into chloroplast stroma"/>
    <property type="evidence" value="ECO:0000318"/>
    <property type="project" value="GO_Central"/>
</dbReference>
<dbReference type="GO" id="GO:0006508">
    <property type="term" value="P:proteolysis"/>
    <property type="evidence" value="ECO:0000318"/>
    <property type="project" value="GO_Central"/>
</dbReference>
<dbReference type="CDD" id="cd19501">
    <property type="entry name" value="RecA-like_FtsH"/>
    <property type="match status" value="1"/>
</dbReference>
<dbReference type="FunFam" id="1.10.8.60:FF:000001">
    <property type="entry name" value="ATP-dependent zinc metalloprotease FtsH"/>
    <property type="match status" value="1"/>
</dbReference>
<dbReference type="FunFam" id="1.20.58.760:FF:000002">
    <property type="entry name" value="ATP-dependent zinc metalloprotease FtsH"/>
    <property type="match status" value="1"/>
</dbReference>
<dbReference type="FunFam" id="3.40.50.300:FF:000195">
    <property type="entry name" value="ATP-dependent zinc metalloprotease FTSH 11"/>
    <property type="match status" value="1"/>
</dbReference>
<dbReference type="Gene3D" id="1.10.8.60">
    <property type="match status" value="1"/>
</dbReference>
<dbReference type="Gene3D" id="3.40.50.300">
    <property type="entry name" value="P-loop containing nucleotide triphosphate hydrolases"/>
    <property type="match status" value="1"/>
</dbReference>
<dbReference type="Gene3D" id="1.20.58.760">
    <property type="entry name" value="Peptidase M41"/>
    <property type="match status" value="1"/>
</dbReference>
<dbReference type="HAMAP" id="MF_01458">
    <property type="entry name" value="FtsH"/>
    <property type="match status" value="1"/>
</dbReference>
<dbReference type="InterPro" id="IPR003593">
    <property type="entry name" value="AAA+_ATPase"/>
</dbReference>
<dbReference type="InterPro" id="IPR041569">
    <property type="entry name" value="AAA_lid_3"/>
</dbReference>
<dbReference type="InterPro" id="IPR003959">
    <property type="entry name" value="ATPase_AAA_core"/>
</dbReference>
<dbReference type="InterPro" id="IPR003960">
    <property type="entry name" value="ATPase_AAA_CS"/>
</dbReference>
<dbReference type="InterPro" id="IPR005936">
    <property type="entry name" value="FtsH"/>
</dbReference>
<dbReference type="InterPro" id="IPR027417">
    <property type="entry name" value="P-loop_NTPase"/>
</dbReference>
<dbReference type="InterPro" id="IPR000642">
    <property type="entry name" value="Peptidase_M41"/>
</dbReference>
<dbReference type="InterPro" id="IPR037219">
    <property type="entry name" value="Peptidase_M41-like"/>
</dbReference>
<dbReference type="NCBIfam" id="TIGR01241">
    <property type="entry name" value="FtsH_fam"/>
    <property type="match status" value="1"/>
</dbReference>
<dbReference type="PANTHER" id="PTHR23076:SF97">
    <property type="entry name" value="ATP-DEPENDENT ZINC METALLOPROTEASE YME1L1"/>
    <property type="match status" value="1"/>
</dbReference>
<dbReference type="PANTHER" id="PTHR23076">
    <property type="entry name" value="METALLOPROTEASE M41 FTSH"/>
    <property type="match status" value="1"/>
</dbReference>
<dbReference type="Pfam" id="PF00004">
    <property type="entry name" value="AAA"/>
    <property type="match status" value="1"/>
</dbReference>
<dbReference type="Pfam" id="PF17862">
    <property type="entry name" value="AAA_lid_3"/>
    <property type="match status" value="1"/>
</dbReference>
<dbReference type="Pfam" id="PF01434">
    <property type="entry name" value="Peptidase_M41"/>
    <property type="match status" value="1"/>
</dbReference>
<dbReference type="SMART" id="SM00382">
    <property type="entry name" value="AAA"/>
    <property type="match status" value="1"/>
</dbReference>
<dbReference type="SUPFAM" id="SSF140990">
    <property type="entry name" value="FtsH protease domain-like"/>
    <property type="match status" value="1"/>
</dbReference>
<dbReference type="SUPFAM" id="SSF52540">
    <property type="entry name" value="P-loop containing nucleoside triphosphate hydrolases"/>
    <property type="match status" value="1"/>
</dbReference>
<dbReference type="PROSITE" id="PS00674">
    <property type="entry name" value="AAA"/>
    <property type="match status" value="1"/>
</dbReference>
<comment type="function">
    <text evidence="1">Probable ATP-dependent zinc metallopeptidase.</text>
</comment>
<comment type="cofactor">
    <cofactor evidence="1">
        <name>Zn(2+)</name>
        <dbReference type="ChEBI" id="CHEBI:29105"/>
    </cofactor>
    <text evidence="1">Binds 1 zinc ion per subunit.</text>
</comment>
<comment type="subcellular location">
    <subcellularLocation>
        <location>Mitochondrion membrane</location>
        <topology>Multi-pass membrane protein</topology>
    </subcellularLocation>
    <subcellularLocation>
        <location evidence="1">Plastid</location>
        <location evidence="1">Chloroplast thylakoid membrane</location>
        <topology evidence="1">Multi-pass membrane protein</topology>
    </subcellularLocation>
</comment>
<comment type="similarity">
    <text evidence="4">In the N-terminal section; belongs to the AAA ATPase family.</text>
</comment>
<comment type="similarity">
    <text evidence="4">In the C-terminal section; belongs to the peptidase M41 family.</text>
</comment>
<comment type="sequence caution" evidence="4">
    <conflict type="erroneous gene model prediction">
        <sequence resource="EMBL-CDS" id="BAD61518"/>
    </conflict>
</comment>
<comment type="sequence caution" evidence="4">
    <conflict type="erroneous gene model prediction">
        <sequence resource="EMBL-CDS" id="BAD61519"/>
    </conflict>
</comment>
<comment type="sequence caution" evidence="4">
    <conflict type="erroneous gene model prediction">
        <sequence resource="EMBL-CDS" id="BAF05507"/>
    </conflict>
</comment>
<protein>
    <recommendedName>
        <fullName>ATP-dependent zinc metalloprotease FTSH 9, chloroplastic/mitochondrial</fullName>
        <shortName>OsFTSH9</shortName>
        <ecNumber>3.4.24.-</ecNumber>
    </recommendedName>
</protein>
<sequence length="784" mass="85793">MSALQASLLLRPLPSPLPPRRRLPLPSSSASFPRAGHHRRLPLPLRALASEGPQPAPSPAPDPPPPELPAAPEAEEVVGTAAAEGGGKVEEEELEDLVEKGRAWVLALAAAVVAAARRFFDWVVSGDWMSWWPFWRPDRRLQRLIDDADANPADPAKQSALLHELNKFSPEDVIKRFEQRSHAVDSRGVAEYLRALILTNGIADYLPDEQSGRSASLPALLQELKQRVSGNEDKPFMNPGISEKQPLHVVMVDPKATGRSTRFAQEIFSTVLFTIAVGLMWVMGAAALQKYIGSLGGIGASGVGSSSSYSPKELNKDIMPEKNVKTFKDVKGCDDAKKELEEVVEYLKNPSKFTRLGGKLPKGILLTGSPGTGKTLLAKAIAGEAGVPFFYRAGSEFEEMFVGVGARRVRSLFQAAKKKAPCIVFIDEIDAVGSTRKQWEGHTKKTLHQLLVEMDGFEQNEGIIVMAATNLPDILDPALTRPGRFDRHIVVPNPDVRGRQEILELYLQDKPVSSDVDVNAIARSTPGFNGADLANLVNIAAIKAAVEGADKLAAAQLEFAKDRIIMGTERKSMFISDESKKACLFKLLYFILRELILTAYHESGHAIVALNTQGAHPIHKATILPRGSALGMVTQLPSQDETSISKKQLLARLDVCMGGRVAEELIFGEDNVTTGARNDLHTATELAQYMVSNCGMSDAIGPVHVKERPSVEMQSRIDAEVVKLLREAYGRVKRLLKKHEKQLHALANALLERETLTADEINKVVHPYQEEPQLSFQEEDFALT</sequence>
<gene>
    <name type="primary">FTSH9</name>
    <name type="ordered locus">Os01g0618800</name>
    <name type="ordered locus">LOC_Os01g43150</name>
    <name type="ORF">B1040D09.10-1</name>
    <name type="ORF">B1040D09.11</name>
    <name type="ORF">OsJ_002539</name>
</gene>
<name>FTSH9_ORYSJ</name>
<evidence type="ECO:0000250" key="1"/>
<evidence type="ECO:0000255" key="2"/>
<evidence type="ECO:0000256" key="3">
    <source>
        <dbReference type="SAM" id="MobiDB-lite"/>
    </source>
</evidence>
<evidence type="ECO:0000305" key="4"/>
<feature type="transit peptide" description="Chloroplast and mitochondrion" evidence="2">
    <location>
        <begin position="1"/>
        <end position="47"/>
    </location>
</feature>
<feature type="chain" id="PRO_0000341345" description="ATP-dependent zinc metalloprotease FTSH 9, chloroplastic/mitochondrial">
    <location>
        <begin position="48"/>
        <end position="784"/>
    </location>
</feature>
<feature type="transmembrane region" description="Helical" evidence="2">
    <location>
        <begin position="104"/>
        <end position="124"/>
    </location>
</feature>
<feature type="transmembrane region" description="Helical" evidence="2">
    <location>
        <begin position="267"/>
        <end position="287"/>
    </location>
</feature>
<feature type="region of interest" description="Disordered" evidence="3">
    <location>
        <begin position="1"/>
        <end position="71"/>
    </location>
</feature>
<feature type="compositionally biased region" description="Low complexity" evidence="3">
    <location>
        <begin position="1"/>
        <end position="12"/>
    </location>
</feature>
<feature type="compositionally biased region" description="Low complexity" evidence="3">
    <location>
        <begin position="24"/>
        <end position="34"/>
    </location>
</feature>
<feature type="compositionally biased region" description="Low complexity" evidence="3">
    <location>
        <begin position="42"/>
        <end position="53"/>
    </location>
</feature>
<feature type="compositionally biased region" description="Pro residues" evidence="3">
    <location>
        <begin position="54"/>
        <end position="69"/>
    </location>
</feature>
<feature type="active site" evidence="1">
    <location>
        <position position="602"/>
    </location>
</feature>
<feature type="binding site" evidence="2">
    <location>
        <begin position="368"/>
        <end position="375"/>
    </location>
    <ligand>
        <name>ATP</name>
        <dbReference type="ChEBI" id="CHEBI:30616"/>
    </ligand>
</feature>
<feature type="binding site" evidence="1">
    <location>
        <position position="601"/>
    </location>
    <ligand>
        <name>Zn(2+)</name>
        <dbReference type="ChEBI" id="CHEBI:29105"/>
        <note>catalytic</note>
    </ligand>
</feature>
<feature type="binding site" evidence="1">
    <location>
        <position position="605"/>
    </location>
    <ligand>
        <name>Zn(2+)</name>
        <dbReference type="ChEBI" id="CHEBI:29105"/>
        <note>catalytic</note>
    </ligand>
</feature>
<feature type="binding site" evidence="1">
    <location>
        <position position="679"/>
    </location>
    <ligand>
        <name>Zn(2+)</name>
        <dbReference type="ChEBI" id="CHEBI:29105"/>
        <note>catalytic</note>
    </ligand>
</feature>
<organism>
    <name type="scientific">Oryza sativa subsp. japonica</name>
    <name type="common">Rice</name>
    <dbReference type="NCBI Taxonomy" id="39947"/>
    <lineage>
        <taxon>Eukaryota</taxon>
        <taxon>Viridiplantae</taxon>
        <taxon>Streptophyta</taxon>
        <taxon>Embryophyta</taxon>
        <taxon>Tracheophyta</taxon>
        <taxon>Spermatophyta</taxon>
        <taxon>Magnoliopsida</taxon>
        <taxon>Liliopsida</taxon>
        <taxon>Poales</taxon>
        <taxon>Poaceae</taxon>
        <taxon>BOP clade</taxon>
        <taxon>Oryzoideae</taxon>
        <taxon>Oryzeae</taxon>
        <taxon>Oryzinae</taxon>
        <taxon>Oryza</taxon>
        <taxon>Oryza sativa</taxon>
    </lineage>
</organism>
<keyword id="KW-0067">ATP-binding</keyword>
<keyword id="KW-0150">Chloroplast</keyword>
<keyword id="KW-0378">Hydrolase</keyword>
<keyword id="KW-0472">Membrane</keyword>
<keyword id="KW-0479">Metal-binding</keyword>
<keyword id="KW-0482">Metalloprotease</keyword>
<keyword id="KW-0496">Mitochondrion</keyword>
<keyword id="KW-0547">Nucleotide-binding</keyword>
<keyword id="KW-0934">Plastid</keyword>
<keyword id="KW-0645">Protease</keyword>
<keyword id="KW-1185">Reference proteome</keyword>
<keyword id="KW-0793">Thylakoid</keyword>
<keyword id="KW-0809">Transit peptide</keyword>
<keyword id="KW-0812">Transmembrane</keyword>
<keyword id="KW-1133">Transmembrane helix</keyword>
<keyword id="KW-0862">Zinc</keyword>
<reference key="1">
    <citation type="journal article" date="2002" name="Nature">
        <title>The genome sequence and structure of rice chromosome 1.</title>
        <authorList>
            <person name="Sasaki T."/>
            <person name="Matsumoto T."/>
            <person name="Yamamoto K."/>
            <person name="Sakata K."/>
            <person name="Baba T."/>
            <person name="Katayose Y."/>
            <person name="Wu J."/>
            <person name="Niimura Y."/>
            <person name="Cheng Z."/>
            <person name="Nagamura Y."/>
            <person name="Antonio B.A."/>
            <person name="Kanamori H."/>
            <person name="Hosokawa S."/>
            <person name="Masukawa M."/>
            <person name="Arikawa K."/>
            <person name="Chiden Y."/>
            <person name="Hayashi M."/>
            <person name="Okamoto M."/>
            <person name="Ando T."/>
            <person name="Aoki H."/>
            <person name="Arita K."/>
            <person name="Hamada M."/>
            <person name="Harada C."/>
            <person name="Hijishita S."/>
            <person name="Honda M."/>
            <person name="Ichikawa Y."/>
            <person name="Idonuma A."/>
            <person name="Iijima M."/>
            <person name="Ikeda M."/>
            <person name="Ikeno M."/>
            <person name="Ito S."/>
            <person name="Ito T."/>
            <person name="Ito Y."/>
            <person name="Ito Y."/>
            <person name="Iwabuchi A."/>
            <person name="Kamiya K."/>
            <person name="Karasawa W."/>
            <person name="Katagiri S."/>
            <person name="Kikuta A."/>
            <person name="Kobayashi N."/>
            <person name="Kono I."/>
            <person name="Machita K."/>
            <person name="Maehara T."/>
            <person name="Mizuno H."/>
            <person name="Mizubayashi T."/>
            <person name="Mukai Y."/>
            <person name="Nagasaki H."/>
            <person name="Nakashima M."/>
            <person name="Nakama Y."/>
            <person name="Nakamichi Y."/>
            <person name="Nakamura M."/>
            <person name="Namiki N."/>
            <person name="Negishi M."/>
            <person name="Ohta I."/>
            <person name="Ono N."/>
            <person name="Saji S."/>
            <person name="Sakai K."/>
            <person name="Shibata M."/>
            <person name="Shimokawa T."/>
            <person name="Shomura A."/>
            <person name="Song J."/>
            <person name="Takazaki Y."/>
            <person name="Terasawa K."/>
            <person name="Tsuji K."/>
            <person name="Waki K."/>
            <person name="Yamagata H."/>
            <person name="Yamane H."/>
            <person name="Yoshiki S."/>
            <person name="Yoshihara R."/>
            <person name="Yukawa K."/>
            <person name="Zhong H."/>
            <person name="Iwama H."/>
            <person name="Endo T."/>
            <person name="Ito H."/>
            <person name="Hahn J.H."/>
            <person name="Kim H.-I."/>
            <person name="Eun M.-Y."/>
            <person name="Yano M."/>
            <person name="Jiang J."/>
            <person name="Gojobori T."/>
        </authorList>
    </citation>
    <scope>NUCLEOTIDE SEQUENCE [LARGE SCALE GENOMIC DNA]</scope>
    <source>
        <strain>cv. Nipponbare</strain>
    </source>
</reference>
<reference key="2">
    <citation type="journal article" date="2005" name="Nature">
        <title>The map-based sequence of the rice genome.</title>
        <authorList>
            <consortium name="International rice genome sequencing project (IRGSP)"/>
        </authorList>
    </citation>
    <scope>NUCLEOTIDE SEQUENCE [LARGE SCALE GENOMIC DNA]</scope>
    <source>
        <strain>cv. Nipponbare</strain>
    </source>
</reference>
<reference key="3">
    <citation type="journal article" date="2008" name="Nucleic Acids Res.">
        <title>The rice annotation project database (RAP-DB): 2008 update.</title>
        <authorList>
            <consortium name="The rice annotation project (RAP)"/>
        </authorList>
    </citation>
    <scope>GENOME REANNOTATION</scope>
    <source>
        <strain>cv. Nipponbare</strain>
    </source>
</reference>
<reference key="4">
    <citation type="journal article" date="2013" name="Rice">
        <title>Improvement of the Oryza sativa Nipponbare reference genome using next generation sequence and optical map data.</title>
        <authorList>
            <person name="Kawahara Y."/>
            <person name="de la Bastide M."/>
            <person name="Hamilton J.P."/>
            <person name="Kanamori H."/>
            <person name="McCombie W.R."/>
            <person name="Ouyang S."/>
            <person name="Schwartz D.C."/>
            <person name="Tanaka T."/>
            <person name="Wu J."/>
            <person name="Zhou S."/>
            <person name="Childs K.L."/>
            <person name="Davidson R.M."/>
            <person name="Lin H."/>
            <person name="Quesada-Ocampo L."/>
            <person name="Vaillancourt B."/>
            <person name="Sakai H."/>
            <person name="Lee S.S."/>
            <person name="Kim J."/>
            <person name="Numa H."/>
            <person name="Itoh T."/>
            <person name="Buell C.R."/>
            <person name="Matsumoto T."/>
        </authorList>
    </citation>
    <scope>GENOME REANNOTATION</scope>
    <source>
        <strain>cv. Nipponbare</strain>
    </source>
</reference>
<reference key="5">
    <citation type="journal article" date="2005" name="PLoS Biol.">
        <title>The genomes of Oryza sativa: a history of duplications.</title>
        <authorList>
            <person name="Yu J."/>
            <person name="Wang J."/>
            <person name="Lin W."/>
            <person name="Li S."/>
            <person name="Li H."/>
            <person name="Zhou J."/>
            <person name="Ni P."/>
            <person name="Dong W."/>
            <person name="Hu S."/>
            <person name="Zeng C."/>
            <person name="Zhang J."/>
            <person name="Zhang Y."/>
            <person name="Li R."/>
            <person name="Xu Z."/>
            <person name="Li S."/>
            <person name="Li X."/>
            <person name="Zheng H."/>
            <person name="Cong L."/>
            <person name="Lin L."/>
            <person name="Yin J."/>
            <person name="Geng J."/>
            <person name="Li G."/>
            <person name="Shi J."/>
            <person name="Liu J."/>
            <person name="Lv H."/>
            <person name="Li J."/>
            <person name="Wang J."/>
            <person name="Deng Y."/>
            <person name="Ran L."/>
            <person name="Shi X."/>
            <person name="Wang X."/>
            <person name="Wu Q."/>
            <person name="Li C."/>
            <person name="Ren X."/>
            <person name="Wang J."/>
            <person name="Wang X."/>
            <person name="Li D."/>
            <person name="Liu D."/>
            <person name="Zhang X."/>
            <person name="Ji Z."/>
            <person name="Zhao W."/>
            <person name="Sun Y."/>
            <person name="Zhang Z."/>
            <person name="Bao J."/>
            <person name="Han Y."/>
            <person name="Dong L."/>
            <person name="Ji J."/>
            <person name="Chen P."/>
            <person name="Wu S."/>
            <person name="Liu J."/>
            <person name="Xiao Y."/>
            <person name="Bu D."/>
            <person name="Tan J."/>
            <person name="Yang L."/>
            <person name="Ye C."/>
            <person name="Zhang J."/>
            <person name="Xu J."/>
            <person name="Zhou Y."/>
            <person name="Yu Y."/>
            <person name="Zhang B."/>
            <person name="Zhuang S."/>
            <person name="Wei H."/>
            <person name="Liu B."/>
            <person name="Lei M."/>
            <person name="Yu H."/>
            <person name="Li Y."/>
            <person name="Xu H."/>
            <person name="Wei S."/>
            <person name="He X."/>
            <person name="Fang L."/>
            <person name="Zhang Z."/>
            <person name="Zhang Y."/>
            <person name="Huang X."/>
            <person name="Su Z."/>
            <person name="Tong W."/>
            <person name="Li J."/>
            <person name="Tong Z."/>
            <person name="Li S."/>
            <person name="Ye J."/>
            <person name="Wang L."/>
            <person name="Fang L."/>
            <person name="Lei T."/>
            <person name="Chen C.-S."/>
            <person name="Chen H.-C."/>
            <person name="Xu Z."/>
            <person name="Li H."/>
            <person name="Huang H."/>
            <person name="Zhang F."/>
            <person name="Xu H."/>
            <person name="Li N."/>
            <person name="Zhao C."/>
            <person name="Li S."/>
            <person name="Dong L."/>
            <person name="Huang Y."/>
            <person name="Li L."/>
            <person name="Xi Y."/>
            <person name="Qi Q."/>
            <person name="Li W."/>
            <person name="Zhang B."/>
            <person name="Hu W."/>
            <person name="Zhang Y."/>
            <person name="Tian X."/>
            <person name="Jiao Y."/>
            <person name="Liang X."/>
            <person name="Jin J."/>
            <person name="Gao L."/>
            <person name="Zheng W."/>
            <person name="Hao B."/>
            <person name="Liu S.-M."/>
            <person name="Wang W."/>
            <person name="Yuan L."/>
            <person name="Cao M."/>
            <person name="McDermott J."/>
            <person name="Samudrala R."/>
            <person name="Wang J."/>
            <person name="Wong G.K.-S."/>
            <person name="Yang H."/>
        </authorList>
    </citation>
    <scope>NUCLEOTIDE SEQUENCE [LARGE SCALE GENOMIC DNA]</scope>
    <source>
        <strain>cv. Nipponbare</strain>
    </source>
</reference>
<reference key="6">
    <citation type="journal article" date="2005" name="Plant Physiol.">
        <title>Functional redundancy of AtFtsH metalloproteases in thylakoid membrane complexes.</title>
        <authorList>
            <person name="Yu F."/>
            <person name="Park S."/>
            <person name="Rodermel S.R."/>
        </authorList>
    </citation>
    <scope>GENE FAMILY</scope>
    <scope>NOMENCLATURE</scope>
</reference>
<accession>A2ZVG7</accession>
<accession>Q0JL71</accession>
<accession>Q5ZBG5</accession>
<accession>Q5ZBH2</accession>
<proteinExistence type="inferred from homology"/>